<sequence length="56" mass="6641">MKWKMKKCPKDNTYTFKDICPVCGSKTMIPHPSRFSPEDKYVKYRIELKKGVKLNC</sequence>
<protein>
    <recommendedName>
        <fullName evidence="1">Ribosome biogenesis protein Nop10</fullName>
    </recommendedName>
</protein>
<comment type="function">
    <text evidence="1">Involved in ribosome biogenesis; more specifically in 18S rRNA pseudouridylation and in cleavage of pre-rRNA.</text>
</comment>
<comment type="similarity">
    <text evidence="1">Belongs to the NOP10 family.</text>
</comment>
<name>NOP10_SACI3</name>
<feature type="chain" id="PRO_1000212991" description="Ribosome biogenesis protein Nop10">
    <location>
        <begin position="1"/>
        <end position="56"/>
    </location>
</feature>
<organism>
    <name type="scientific">Saccharolobus islandicus (strain M.16.27)</name>
    <name type="common">Sulfolobus islandicus</name>
    <dbReference type="NCBI Taxonomy" id="427318"/>
    <lineage>
        <taxon>Archaea</taxon>
        <taxon>Thermoproteota</taxon>
        <taxon>Thermoprotei</taxon>
        <taxon>Sulfolobales</taxon>
        <taxon>Sulfolobaceae</taxon>
        <taxon>Saccharolobus</taxon>
    </lineage>
</organism>
<proteinExistence type="inferred from homology"/>
<keyword id="KW-0687">Ribonucleoprotein</keyword>
<keyword id="KW-0690">Ribosome biogenesis</keyword>
<keyword id="KW-0698">rRNA processing</keyword>
<reference key="1">
    <citation type="journal article" date="2009" name="Proc. Natl. Acad. Sci. U.S.A.">
        <title>Biogeography of the Sulfolobus islandicus pan-genome.</title>
        <authorList>
            <person name="Reno M.L."/>
            <person name="Held N.L."/>
            <person name="Fields C.J."/>
            <person name="Burke P.V."/>
            <person name="Whitaker R.J."/>
        </authorList>
    </citation>
    <scope>NUCLEOTIDE SEQUENCE [LARGE SCALE GENOMIC DNA]</scope>
    <source>
        <strain>M.16.27</strain>
    </source>
</reference>
<evidence type="ECO:0000255" key="1">
    <source>
        <dbReference type="HAMAP-Rule" id="MF_00803"/>
    </source>
</evidence>
<dbReference type="EMBL" id="CP001401">
    <property type="protein sequence ID" value="ACP55119.1"/>
    <property type="molecule type" value="Genomic_DNA"/>
</dbReference>
<dbReference type="RefSeq" id="WP_012711191.1">
    <property type="nucleotide sequence ID" value="NC_012632.1"/>
</dbReference>
<dbReference type="SMR" id="C3N544"/>
<dbReference type="KEGG" id="sim:M1627_1232"/>
<dbReference type="HOGENOM" id="CLU_196480_1_0_2"/>
<dbReference type="Proteomes" id="UP000002307">
    <property type="component" value="Chromosome"/>
</dbReference>
<dbReference type="GO" id="GO:1990904">
    <property type="term" value="C:ribonucleoprotein complex"/>
    <property type="evidence" value="ECO:0007669"/>
    <property type="project" value="UniProtKB-KW"/>
</dbReference>
<dbReference type="GO" id="GO:0030515">
    <property type="term" value="F:snoRNA binding"/>
    <property type="evidence" value="ECO:0007669"/>
    <property type="project" value="InterPro"/>
</dbReference>
<dbReference type="GO" id="GO:0001522">
    <property type="term" value="P:pseudouridine synthesis"/>
    <property type="evidence" value="ECO:0007669"/>
    <property type="project" value="InterPro"/>
</dbReference>
<dbReference type="GO" id="GO:0006364">
    <property type="term" value="P:rRNA processing"/>
    <property type="evidence" value="ECO:0007669"/>
    <property type="project" value="UniProtKB-UniRule"/>
</dbReference>
<dbReference type="Gene3D" id="2.20.28.40">
    <property type="entry name" value="H/ACA ribonucleoprotein complex, subunit Nop10"/>
    <property type="match status" value="1"/>
</dbReference>
<dbReference type="HAMAP" id="MF_00803">
    <property type="entry name" value="Nop10"/>
    <property type="match status" value="1"/>
</dbReference>
<dbReference type="InterPro" id="IPR007264">
    <property type="entry name" value="H/ACA_rnp_Nop10"/>
</dbReference>
<dbReference type="InterPro" id="IPR036756">
    <property type="entry name" value="H/ACA_rnp_Nop10_sf"/>
</dbReference>
<dbReference type="InterPro" id="IPR023532">
    <property type="entry name" value="Nop10_arc-typ"/>
</dbReference>
<dbReference type="NCBIfam" id="NF009623">
    <property type="entry name" value="PRK13130.1"/>
    <property type="match status" value="1"/>
</dbReference>
<dbReference type="PANTHER" id="PTHR13305:SF0">
    <property type="entry name" value="H_ACA RIBONUCLEOPROTEIN COMPLEX SUBUNIT 3"/>
    <property type="match status" value="1"/>
</dbReference>
<dbReference type="PANTHER" id="PTHR13305">
    <property type="entry name" value="RIBOSOME BIOGENESIS PROTEIN NOP10"/>
    <property type="match status" value="1"/>
</dbReference>
<dbReference type="Pfam" id="PF04135">
    <property type="entry name" value="Nop10p"/>
    <property type="match status" value="1"/>
</dbReference>
<dbReference type="SUPFAM" id="SSF144210">
    <property type="entry name" value="Nop10-like SnoRNP"/>
    <property type="match status" value="1"/>
</dbReference>
<gene>
    <name evidence="1" type="primary">nop10</name>
    <name type="ordered locus">M1627_1232</name>
</gene>
<accession>C3N544</accession>